<sequence>MRSSTAAVQRPAAGDPEPRRPAGWAARRSLPRTARRGGRGGAVAYPSAGPPPRGPGAPPRGPRSPPCASDCFGSNGHGASRPGSRRLLGVCGPPRPFVVVLLALAPAATPARACPPGVRASPPRSGVSSSARPAPGCPRPACEPVYGPLTMSLKPQPQPPAPATGRKPGGGLLSSPGAAPASAAVTSASVVPAPAAPVASSSAAAGGGRPGLGRGRNSSKGLPQPTISFDGIYANVRMVHILTSVVGSKCEVQVKNGGIYEGVFKTYSPKCDLVLDAAHEKSTESSSGPKREEIMESVLFKCSDFVVVQFKDTDSSYARRDAFTDSALSAKVNGEHKEKDLEPWDAGELTASEELELENDVSNGWDPNDMFRYNEENYGVVSTYDSSLSSYTVPLERDNSEEFLKREARANQLAEEIESSAQYKARVALENDDRSEEEKYTAVQRNCSDREGHGPNTRDNKYIPPGQRNREVLSWGSGRQSSPRMGQPGPGSMPSRAASHTSDFNPNAGSDQRVVNGGVPWPSPCPSHSSRPPSRYQSGPNSLPPRAATHTRPPSRPPSRPSRPPSHPSAHGSPAPVSTMPKRMSSEGPPRMSPKAQRHPRNHRVSAGRGSMSSGLEFVSHNPPSEAAAPPVARTSPAGGTWSSVVSGVPRLSPKTHRPRSPRQSSIGNSPSGPVLASPQAGIIPAEAVSMPVPAASPTPASPASNRALTPSIEAKDSRLQDQRQNSPAGSKENVKASETSPSFSKADNKGMSPVVSEHRKQIDDLKKFKNDFRLQPSSTSESMDQLLSKNREGEKSRDLIKDKTEASAKDSFIDSSSSSSNCTSGSSKTNSPSISPSMLSNAEHKRGPEVTSQGVQTSSPACKQEKDDREEKKDTTEQVRKSTLNPNAKEFNPRSFSQPKPSTTPTSPRPQAQPSPSMVGHQQPAPVYTQPVCFAPNMMYPVPVSPGVQPLYPIPMTPMPVNQAKTYRAGKVPNMPQQRQDQHHQSTMMHPASAAGPPIVATPPAYSTQYVAYSPQQFPNQPLVQHVPHYQSQHPHVYSPVIQGNARMMAPPAHAQPGLVSSSAAQFGAHEQTHAMYACPKLPYNKETSPSFYFAISTGSLAQQYAHPNAALHPHTPHPQPSATPTGQQQSQHGGSHPAPSPVQHHQHQAAQALHLASPQQQSAIYHAGLAPTPPSMTPASNTQSPQSSFPAAQQTVFTIHPSHVQPAYTTPPHMAHVPQAHVQSGMVPSHPTAHAPMMLMTTQPPGPKAALAQSALQPIPVSTTAHFPYMTHPSVQAHHQQQL</sequence>
<proteinExistence type="evidence at protein level"/>
<name>ATX2_MOUSE</name>
<evidence type="ECO:0000250" key="1">
    <source>
        <dbReference type="UniProtKB" id="Q99700"/>
    </source>
</evidence>
<evidence type="ECO:0000255" key="2">
    <source>
        <dbReference type="PROSITE-ProRule" id="PRU01346"/>
    </source>
</evidence>
<evidence type="ECO:0000256" key="3">
    <source>
        <dbReference type="SAM" id="MobiDB-lite"/>
    </source>
</evidence>
<evidence type="ECO:0000269" key="4">
    <source>
    </source>
</evidence>
<evidence type="ECO:0000269" key="5">
    <source>
    </source>
</evidence>
<evidence type="ECO:0000303" key="6">
    <source>
    </source>
</evidence>
<evidence type="ECO:0000305" key="7"/>
<evidence type="ECO:0007744" key="8">
    <source>
    </source>
</evidence>
<evidence type="ECO:0007744" key="9">
    <source>
    </source>
</evidence>
<evidence type="ECO:0007744" key="10">
    <source>
    </source>
</evidence>
<gene>
    <name type="primary">Atxn2</name>
    <name type="synonym">Atx2</name>
    <name type="synonym">Sca2</name>
</gene>
<comment type="function">
    <text evidence="4">Involved in EGFR trafficking, acting as negative regulator of endocytic EGFR internalization at the plasma membrane.</text>
</comment>
<comment type="subunit">
    <text evidence="1 4 5">Interacts with RBFOX1 (By similarity). Monomer. Can also form homodimers. Interacts with polyribosomes (By similarity). Interacts with EGFR (By similarity). Interacts with SH3GL3 (By similarity). Interacts with SH3GL2, SH3KBP1 and CBL (PubMed:18602463). Interacts with ATXN2L (By similarity).</text>
</comment>
<comment type="subcellular location">
    <subcellularLocation>
        <location evidence="5">Cytoplasm</location>
    </subcellularLocation>
</comment>
<comment type="alternative products">
    <event type="alternative splicing"/>
    <isoform>
        <id>O70305-1</id>
        <name>1</name>
        <name>Type I</name>
        <sequence type="displayed"/>
    </isoform>
    <isoform>
        <id>O70305-2</id>
        <name>2</name>
        <name>Type II</name>
        <sequence type="described" ref="VSP_011583"/>
    </isoform>
    <isoform>
        <id>O70305-3</id>
        <name>3</name>
        <name>Type III</name>
        <sequence type="described" ref="VSP_011583 VSP_011584"/>
    </isoform>
</comment>
<comment type="tissue specificity">
    <text evidence="5">Expressed in the heart, lung, liver, kidney, skeletal muscle, spleen and intestine. Predominant expression was seen in the brain where a high level expression was found in the pyramidal cortical neurons, large brain stem neurons and cerebellar Purkinje cells. All three isoforms were found in all the tissues except skeletal muscle where only isoform 1 was found.</text>
</comment>
<comment type="developmental stage">
    <text evidence="5">Detectable at 8-16 dpc. Lowest expression was seen at 8 dpc.</text>
</comment>
<comment type="similarity">
    <text evidence="7">Belongs to the ataxin-2 family.</text>
</comment>
<reference key="1">
    <citation type="journal article" date="1998" name="Hum. Mol. Genet.">
        <title>The mouse SCA2 gene: cDNA sequence, alternative splicing and protein expression.</title>
        <authorList>
            <person name="Nechiporuk T.T."/>
            <person name="Huynh D.P."/>
            <person name="Figueroa K."/>
            <person name="Sahba S."/>
            <person name="Nechiporuk A.V."/>
            <person name="Pulst S.-M."/>
        </authorList>
    </citation>
    <scope>NUCLEOTIDE SEQUENCE [MRNA] (ISOFORMS 1; 2 AND 3)</scope>
    <scope>SUBUNIT</scope>
    <scope>SUBCELLULAR LOCATION</scope>
    <scope>TISSUE SPECIFICITY</scope>
    <scope>DEVELOPMENTAL STAGE</scope>
    <source>
        <tissue>Brain</tissue>
    </source>
</reference>
<reference key="2">
    <citation type="journal article" date="1996" name="Nat. Genet.">
        <title>Moderate expansion of a normally biallelic trinucleotide repeat in spinocerebellar ataxia type 2.</title>
        <authorList>
            <person name="Pulst S.-M."/>
            <person name="Nechiporuk A."/>
            <person name="Nechiporuk T."/>
            <person name="Gispert S."/>
            <person name="Chen X.-N."/>
            <person name="Lopes-Cendes I."/>
            <person name="Pearlman S."/>
            <person name="Starkman S."/>
            <person name="Orozco-Diaz G."/>
            <person name="Lunkes A."/>
            <person name="DeJong P."/>
            <person name="Rouleau G.A."/>
            <person name="Auburger G."/>
            <person name="Korenberg J.R."/>
            <person name="Figueroa C."/>
            <person name="Sahba S."/>
        </authorList>
    </citation>
    <scope>NUCLEOTIDE SEQUENCE [MRNA] OF 145-563</scope>
</reference>
<reference key="3">
    <citation type="journal article" date="2007" name="Proc. Natl. Acad. Sci. U.S.A.">
        <title>Large-scale phosphorylation analysis of mouse liver.</title>
        <authorList>
            <person name="Villen J."/>
            <person name="Beausoleil S.A."/>
            <person name="Gerber S.A."/>
            <person name="Gygi S.P."/>
        </authorList>
    </citation>
    <scope>PHOSPHORYLATION [LARGE SCALE ANALYSIS] AT SER-653; SER-832 AND SER-836</scope>
    <scope>IDENTIFICATION BY MASS SPECTROMETRY [LARGE SCALE ANALYSIS]</scope>
    <source>
        <tissue>Liver</tissue>
    </source>
</reference>
<reference key="4">
    <citation type="journal article" date="2008" name="Cell. Signal.">
        <title>Ataxin-2 associates with the endocytosis complex and affects EGF receptor trafficking.</title>
        <authorList>
            <person name="Nonis D."/>
            <person name="Schmidt M.H."/>
            <person name="van de Loo S."/>
            <person name="Eich F."/>
            <person name="Dikic I."/>
            <person name="Nowock J."/>
            <person name="Auburger G."/>
        </authorList>
    </citation>
    <scope>FUNCTION</scope>
    <scope>INTERACTION WITH SH3GL2; SH3KBP1 AND CBL</scope>
</reference>
<reference key="5">
    <citation type="journal article" date="2010" name="Cell">
        <title>A tissue-specific atlas of mouse protein phosphorylation and expression.</title>
        <authorList>
            <person name="Huttlin E.L."/>
            <person name="Jedrychowski M.P."/>
            <person name="Elias J.E."/>
            <person name="Goswami T."/>
            <person name="Rad R."/>
            <person name="Beausoleil S.A."/>
            <person name="Villen J."/>
            <person name="Haas W."/>
            <person name="Sowa M.E."/>
            <person name="Gygi S.P."/>
        </authorList>
    </citation>
    <scope>PHOSPHORYLATION [LARGE SCALE ANALYSIS] AT SER-218; SER-219; SER-435; SER-593; SER-653; SER-827; SER-832; SER-836 AND SER-838</scope>
    <scope>IDENTIFICATION BY MASS SPECTROMETRY [LARGE SCALE ANALYSIS]</scope>
    <source>
        <tissue>Brain</tissue>
        <tissue>Brown adipose tissue</tissue>
        <tissue>Heart</tissue>
        <tissue>Kidney</tissue>
        <tissue>Liver</tissue>
        <tissue>Lung</tissue>
        <tissue>Pancreas</tissue>
        <tissue>Spleen</tissue>
        <tissue>Testis</tissue>
    </source>
</reference>
<reference key="6">
    <citation type="journal article" date="2014" name="Mol. Cell. Proteomics">
        <title>Immunoaffinity enrichment and mass spectrometry analysis of protein methylation.</title>
        <authorList>
            <person name="Guo A."/>
            <person name="Gu H."/>
            <person name="Zhou J."/>
            <person name="Mulhern D."/>
            <person name="Wang Y."/>
            <person name="Lee K.A."/>
            <person name="Yang V."/>
            <person name="Aguiar M."/>
            <person name="Kornhauser J."/>
            <person name="Jia X."/>
            <person name="Ren J."/>
            <person name="Beausoleil S.A."/>
            <person name="Silva J.C."/>
            <person name="Vemulapalli V."/>
            <person name="Bedford M.T."/>
            <person name="Comb M.J."/>
        </authorList>
    </citation>
    <scope>METHYLATION [LARGE SCALE ANALYSIS] AT ARG-609</scope>
    <scope>IDENTIFICATION BY MASS SPECTROMETRY [LARGE SCALE ANALYSIS]</scope>
    <source>
        <tissue>Brain</tissue>
        <tissue>Embryo</tissue>
    </source>
</reference>
<dbReference type="EMBL" id="AF041472">
    <property type="protein sequence ID" value="AAC09275.1"/>
    <property type="molecule type" value="mRNA"/>
</dbReference>
<dbReference type="EMBL" id="U70670">
    <property type="protein sequence ID" value="AAB19202.1"/>
    <property type="molecule type" value="mRNA"/>
</dbReference>
<dbReference type="PIR" id="T14171">
    <property type="entry name" value="T14171"/>
</dbReference>
<dbReference type="RefSeq" id="NP_033151.2">
    <property type="nucleotide sequence ID" value="NM_009125.2"/>
</dbReference>
<dbReference type="SMR" id="O70305"/>
<dbReference type="BioGRID" id="203084">
    <property type="interactions" value="61"/>
</dbReference>
<dbReference type="FunCoup" id="O70305">
    <property type="interactions" value="2159"/>
</dbReference>
<dbReference type="IntAct" id="O70305">
    <property type="interactions" value="5"/>
</dbReference>
<dbReference type="MINT" id="O70305"/>
<dbReference type="STRING" id="10090.ENSMUSP00000056715"/>
<dbReference type="BindingDB" id="O70305"/>
<dbReference type="ChEMBL" id="CHEMBL4630804"/>
<dbReference type="GlyGen" id="O70305">
    <property type="glycosylation" value="15 sites, 2 N-linked glycans (2 sites), 1 O-linked glycan (10 sites)"/>
</dbReference>
<dbReference type="iPTMnet" id="O70305"/>
<dbReference type="PhosphoSitePlus" id="O70305"/>
<dbReference type="jPOST" id="O70305"/>
<dbReference type="PaxDb" id="10090-ENSMUSP00000056715"/>
<dbReference type="PeptideAtlas" id="O70305"/>
<dbReference type="ProteomicsDB" id="277205">
    <molecule id="O70305-1"/>
</dbReference>
<dbReference type="ProteomicsDB" id="277206">
    <molecule id="O70305-2"/>
</dbReference>
<dbReference type="ProteomicsDB" id="277207">
    <molecule id="O70305-3"/>
</dbReference>
<dbReference type="Pumba" id="O70305"/>
<dbReference type="DNASU" id="20239"/>
<dbReference type="GeneID" id="20239"/>
<dbReference type="KEGG" id="mmu:20239"/>
<dbReference type="AGR" id="MGI:1277223"/>
<dbReference type="CTD" id="6311"/>
<dbReference type="MGI" id="MGI:1277223">
    <property type="gene designation" value="Atxn2"/>
</dbReference>
<dbReference type="eggNOG" id="KOG2375">
    <property type="taxonomic scope" value="Eukaryota"/>
</dbReference>
<dbReference type="InParanoid" id="O70305"/>
<dbReference type="PhylomeDB" id="O70305"/>
<dbReference type="BioGRID-ORCS" id="20239">
    <property type="hits" value="5 hits in 79 CRISPR screens"/>
</dbReference>
<dbReference type="CD-CODE" id="CE726F99">
    <property type="entry name" value="Postsynaptic density"/>
</dbReference>
<dbReference type="CD-CODE" id="D12E4DB9">
    <property type="entry name" value="Stress granule"/>
</dbReference>
<dbReference type="ChiTaRS" id="Atxn2">
    <property type="organism name" value="mouse"/>
</dbReference>
<dbReference type="PRO" id="PR:O70305"/>
<dbReference type="Proteomes" id="UP000000589">
    <property type="component" value="Unplaced"/>
</dbReference>
<dbReference type="RNAct" id="O70305">
    <property type="molecule type" value="protein"/>
</dbReference>
<dbReference type="GO" id="GO:0005737">
    <property type="term" value="C:cytoplasm"/>
    <property type="evidence" value="ECO:0000314"/>
    <property type="project" value="MGI"/>
</dbReference>
<dbReference type="GO" id="GO:0048471">
    <property type="term" value="C:perinuclear region of cytoplasm"/>
    <property type="evidence" value="ECO:0000314"/>
    <property type="project" value="MGI"/>
</dbReference>
<dbReference type="GO" id="GO:0003723">
    <property type="term" value="F:RNA binding"/>
    <property type="evidence" value="ECO:0007669"/>
    <property type="project" value="InterPro"/>
</dbReference>
<dbReference type="GO" id="GO:0021702">
    <property type="term" value="P:cerebellar Purkinje cell differentiation"/>
    <property type="evidence" value="ECO:0000315"/>
    <property type="project" value="MGI"/>
</dbReference>
<dbReference type="GO" id="GO:0048872">
    <property type="term" value="P:homeostasis of number of cells"/>
    <property type="evidence" value="ECO:0000315"/>
    <property type="project" value="MGI"/>
</dbReference>
<dbReference type="GO" id="GO:0040015">
    <property type="term" value="P:negative regulation of multicellular organism growth"/>
    <property type="evidence" value="ECO:0000315"/>
    <property type="project" value="MGI"/>
</dbReference>
<dbReference type="GO" id="GO:0050905">
    <property type="term" value="P:neuromuscular process"/>
    <property type="evidence" value="ECO:0000315"/>
    <property type="project" value="MGI"/>
</dbReference>
<dbReference type="GO" id="GO:0048812">
    <property type="term" value="P:neuron projection morphogenesis"/>
    <property type="evidence" value="ECO:0000315"/>
    <property type="project" value="MGI"/>
</dbReference>
<dbReference type="CDD" id="cd00600">
    <property type="entry name" value="Sm_like"/>
    <property type="match status" value="1"/>
</dbReference>
<dbReference type="InterPro" id="IPR045117">
    <property type="entry name" value="ATXN2-like"/>
</dbReference>
<dbReference type="InterPro" id="IPR010920">
    <property type="entry name" value="LSM_dom_sf"/>
</dbReference>
<dbReference type="InterPro" id="IPR009604">
    <property type="entry name" value="LsmAD_domain"/>
</dbReference>
<dbReference type="InterPro" id="IPR009818">
    <property type="entry name" value="PAM2_motif"/>
</dbReference>
<dbReference type="InterPro" id="IPR047575">
    <property type="entry name" value="Sm"/>
</dbReference>
<dbReference type="InterPro" id="IPR025852">
    <property type="entry name" value="SM_dom_ATX"/>
</dbReference>
<dbReference type="PANTHER" id="PTHR12854">
    <property type="entry name" value="ATAXIN 2-RELATED"/>
    <property type="match status" value="1"/>
</dbReference>
<dbReference type="PANTHER" id="PTHR12854:SF11">
    <property type="entry name" value="ATAXIN-2"/>
    <property type="match status" value="1"/>
</dbReference>
<dbReference type="Pfam" id="PF06741">
    <property type="entry name" value="LsmAD"/>
    <property type="match status" value="1"/>
</dbReference>
<dbReference type="Pfam" id="PF07145">
    <property type="entry name" value="PAM2"/>
    <property type="match status" value="1"/>
</dbReference>
<dbReference type="Pfam" id="PF14438">
    <property type="entry name" value="SM-ATX"/>
    <property type="match status" value="1"/>
</dbReference>
<dbReference type="SMART" id="SM01272">
    <property type="entry name" value="LsmAD"/>
    <property type="match status" value="1"/>
</dbReference>
<dbReference type="SUPFAM" id="SSF50182">
    <property type="entry name" value="Sm-like ribonucleoproteins"/>
    <property type="match status" value="1"/>
</dbReference>
<dbReference type="PROSITE" id="PS52002">
    <property type="entry name" value="SM"/>
    <property type="match status" value="1"/>
</dbReference>
<keyword id="KW-0025">Alternative splicing</keyword>
<keyword id="KW-0963">Cytoplasm</keyword>
<keyword id="KW-1017">Isopeptide bond</keyword>
<keyword id="KW-0488">Methylation</keyword>
<keyword id="KW-0597">Phosphoprotein</keyword>
<keyword id="KW-1185">Reference proteome</keyword>
<keyword id="KW-0832">Ubl conjugation</keyword>
<protein>
    <recommendedName>
        <fullName>Ataxin-2</fullName>
    </recommendedName>
    <alternativeName>
        <fullName>Spinocerebellar ataxia type 2 protein homolog</fullName>
    </alternativeName>
</protein>
<organism>
    <name type="scientific">Mus musculus</name>
    <name type="common">Mouse</name>
    <dbReference type="NCBI Taxonomy" id="10090"/>
    <lineage>
        <taxon>Eukaryota</taxon>
        <taxon>Metazoa</taxon>
        <taxon>Chordata</taxon>
        <taxon>Craniata</taxon>
        <taxon>Vertebrata</taxon>
        <taxon>Euteleostomi</taxon>
        <taxon>Mammalia</taxon>
        <taxon>Eutheria</taxon>
        <taxon>Euarchontoglires</taxon>
        <taxon>Glires</taxon>
        <taxon>Rodentia</taxon>
        <taxon>Myomorpha</taxon>
        <taxon>Muroidea</taxon>
        <taxon>Muridae</taxon>
        <taxon>Murinae</taxon>
        <taxon>Mus</taxon>
        <taxon>Mus</taxon>
    </lineage>
</organism>
<feature type="chain" id="PRO_0000064757" description="Ataxin-2">
    <location>
        <begin position="1"/>
        <end position="1285"/>
    </location>
</feature>
<feature type="domain" description="Sm" evidence="2">
    <location>
        <begin position="237"/>
        <end position="314"/>
    </location>
</feature>
<feature type="region of interest" description="Disordered" evidence="3">
    <location>
        <begin position="1"/>
        <end position="85"/>
    </location>
</feature>
<feature type="region of interest" description="Disordered" evidence="3">
    <location>
        <begin position="111"/>
        <end position="178"/>
    </location>
</feature>
<feature type="region of interest" description="Disordered" evidence="3">
    <location>
        <begin position="197"/>
        <end position="224"/>
    </location>
</feature>
<feature type="region of interest" description="Disordered" evidence="3">
    <location>
        <begin position="428"/>
        <end position="925"/>
    </location>
</feature>
<feature type="region of interest" description="Disordered" evidence="3">
    <location>
        <begin position="1111"/>
        <end position="1191"/>
    </location>
</feature>
<feature type="compositionally biased region" description="Basic residues" evidence="3">
    <location>
        <begin position="29"/>
        <end position="38"/>
    </location>
</feature>
<feature type="compositionally biased region" description="Pro residues" evidence="3">
    <location>
        <begin position="48"/>
        <end position="65"/>
    </location>
</feature>
<feature type="compositionally biased region" description="Low complexity" evidence="3">
    <location>
        <begin position="128"/>
        <end position="144"/>
    </location>
</feature>
<feature type="compositionally biased region" description="Gly residues" evidence="3">
    <location>
        <begin position="205"/>
        <end position="214"/>
    </location>
</feature>
<feature type="compositionally biased region" description="Basic and acidic residues" evidence="3">
    <location>
        <begin position="428"/>
        <end position="440"/>
    </location>
</feature>
<feature type="compositionally biased region" description="Basic and acidic residues" evidence="3">
    <location>
        <begin position="447"/>
        <end position="461"/>
    </location>
</feature>
<feature type="compositionally biased region" description="Polar residues" evidence="3">
    <location>
        <begin position="498"/>
        <end position="510"/>
    </location>
</feature>
<feature type="compositionally biased region" description="Low complexity" evidence="3">
    <location>
        <begin position="526"/>
        <end position="552"/>
    </location>
</feature>
<feature type="compositionally biased region" description="Pro residues" evidence="3">
    <location>
        <begin position="554"/>
        <end position="567"/>
    </location>
</feature>
<feature type="compositionally biased region" description="Basic residues" evidence="3">
    <location>
        <begin position="596"/>
        <end position="606"/>
    </location>
</feature>
<feature type="compositionally biased region" description="Polar residues" evidence="3">
    <location>
        <begin position="662"/>
        <end position="672"/>
    </location>
</feature>
<feature type="compositionally biased region" description="Low complexity" evidence="3">
    <location>
        <begin position="685"/>
        <end position="694"/>
    </location>
</feature>
<feature type="compositionally biased region" description="Polar residues" evidence="3">
    <location>
        <begin position="737"/>
        <end position="746"/>
    </location>
</feature>
<feature type="compositionally biased region" description="Basic and acidic residues" evidence="3">
    <location>
        <begin position="757"/>
        <end position="773"/>
    </location>
</feature>
<feature type="compositionally biased region" description="Polar residues" evidence="3">
    <location>
        <begin position="776"/>
        <end position="789"/>
    </location>
</feature>
<feature type="compositionally biased region" description="Basic and acidic residues" evidence="3">
    <location>
        <begin position="790"/>
        <end position="813"/>
    </location>
</feature>
<feature type="compositionally biased region" description="Low complexity" evidence="3">
    <location>
        <begin position="814"/>
        <end position="838"/>
    </location>
</feature>
<feature type="compositionally biased region" description="Polar residues" evidence="3">
    <location>
        <begin position="851"/>
        <end position="862"/>
    </location>
</feature>
<feature type="compositionally biased region" description="Basic and acidic residues" evidence="3">
    <location>
        <begin position="864"/>
        <end position="881"/>
    </location>
</feature>
<feature type="compositionally biased region" description="Low complexity" evidence="3">
    <location>
        <begin position="896"/>
        <end position="907"/>
    </location>
</feature>
<feature type="compositionally biased region" description="Low complexity" evidence="3">
    <location>
        <begin position="1128"/>
        <end position="1165"/>
    </location>
</feature>
<feature type="modified residue" description="Phosphoserine" evidence="9">
    <location>
        <position position="218"/>
    </location>
</feature>
<feature type="modified residue" description="Phosphoserine" evidence="9">
    <location>
        <position position="219"/>
    </location>
</feature>
<feature type="modified residue" description="Phosphoserine" evidence="1">
    <location>
        <position position="362"/>
    </location>
</feature>
<feature type="modified residue" description="Phosphoserine" evidence="9">
    <location>
        <position position="435"/>
    </location>
</feature>
<feature type="modified residue" description="Phosphoserine" evidence="1">
    <location>
        <position position="477"/>
    </location>
</feature>
<feature type="modified residue" description="Phosphoserine" evidence="1">
    <location>
        <position position="523"/>
    </location>
</feature>
<feature type="modified residue" description="Phosphoserine" evidence="9">
    <location>
        <position position="593"/>
    </location>
</feature>
<feature type="modified residue" description="Asymmetric dimethylarginine; alternate" evidence="10">
    <location>
        <position position="609"/>
    </location>
</feature>
<feature type="modified residue" description="Omega-N-methylarginine; alternate" evidence="10">
    <location>
        <position position="609"/>
    </location>
</feature>
<feature type="modified residue" description="Phosphoserine" evidence="1">
    <location>
        <position position="611"/>
    </location>
</feature>
<feature type="modified residue" description="Phosphoserine" evidence="8 9">
    <location>
        <position position="653"/>
    </location>
</feature>
<feature type="modified residue" description="Phosphoserine" evidence="1">
    <location>
        <position position="697"/>
    </location>
</feature>
<feature type="modified residue" description="Phosphothreonine" evidence="1">
    <location>
        <position position="710"/>
    </location>
</feature>
<feature type="modified residue" description="Phosphoserine" evidence="1">
    <location>
        <position position="741"/>
    </location>
</feature>
<feature type="modified residue" description="Phosphoserine" evidence="1">
    <location>
        <position position="753"/>
    </location>
</feature>
<feature type="modified residue" description="Phosphoserine" evidence="9">
    <location>
        <position position="827"/>
    </location>
</feature>
<feature type="modified residue" description="Phosphoserine" evidence="1">
    <location>
        <position position="828"/>
    </location>
</feature>
<feature type="modified residue" description="Phosphoserine" evidence="8 9">
    <location>
        <position position="832"/>
    </location>
</feature>
<feature type="modified residue" description="Phosphoserine" evidence="8 9">
    <location>
        <position position="836"/>
    </location>
</feature>
<feature type="modified residue" description="Phosphoserine" evidence="9">
    <location>
        <position position="838"/>
    </location>
</feature>
<feature type="modified residue" description="Phosphoserine" evidence="1">
    <location>
        <position position="859"/>
    </location>
</feature>
<feature type="modified residue" description="Phosphoserine" evidence="1">
    <location>
        <position position="860"/>
    </location>
</feature>
<feature type="cross-link" description="Glycyl lysine isopeptide (Lys-Gly) (interchain with G-Cter in SUMO2)" evidence="1">
    <location>
        <position position="864"/>
    </location>
</feature>
<feature type="splice variant" id="VSP_011583" description="In isoform 2 and isoform 3." evidence="6">
    <location>
        <begin position="519"/>
        <end position="588"/>
    </location>
</feature>
<feature type="splice variant" id="VSP_011584" description="In isoform 3." evidence="6">
    <location>
        <begin position="589"/>
        <end position="649"/>
    </location>
</feature>
<feature type="sequence conflict" description="In Ref. 2; AAB19202." evidence="7" ref="2">
    <original>VY</original>
    <variation>HE</variation>
    <location>
        <begin position="145"/>
        <end position="146"/>
    </location>
</feature>
<feature type="sequence conflict" description="In Ref. 2; AAB19202." evidence="7" ref="2">
    <original>H</original>
    <variation>P</variation>
    <location>
        <position position="528"/>
    </location>
</feature>
<feature type="sequence conflict" description="In Ref. 2; AAB19202." evidence="7" ref="2">
    <original>H</original>
    <variation>P</variation>
    <location>
        <position position="550"/>
    </location>
</feature>
<feature type="sequence conflict" description="In Ref. 2; AAB19202." evidence="7" ref="2">
    <original>PSRPPSRPSR</original>
    <variation>RAEFLQPGDP</variation>
    <location>
        <begin position="554"/>
        <end position="563"/>
    </location>
</feature>
<accession>O70305</accession>
<accession>P97421</accession>